<accession>C4ZUC2</accession>
<name>NUOK_ECOBW</name>
<keyword id="KW-0997">Cell inner membrane</keyword>
<keyword id="KW-1003">Cell membrane</keyword>
<keyword id="KW-0472">Membrane</keyword>
<keyword id="KW-0520">NAD</keyword>
<keyword id="KW-0874">Quinone</keyword>
<keyword id="KW-1278">Translocase</keyword>
<keyword id="KW-0812">Transmembrane</keyword>
<keyword id="KW-1133">Transmembrane helix</keyword>
<keyword id="KW-0813">Transport</keyword>
<keyword id="KW-0830">Ubiquinone</keyword>
<comment type="function">
    <text evidence="1">NDH-1 shuttles electrons from NADH, via FMN and iron-sulfur (Fe-S) centers, to quinones in the respiratory chain. The immediate electron acceptor for the enzyme in this species is believed to be ubiquinone. Couples the redox reaction to proton translocation (for every two electrons transferred, four hydrogen ions are translocated across the cytoplasmic membrane), and thus conserves the redox energy in a proton gradient.</text>
</comment>
<comment type="catalytic activity">
    <reaction evidence="1">
        <text>a quinone + NADH + 5 H(+)(in) = a quinol + NAD(+) + 4 H(+)(out)</text>
        <dbReference type="Rhea" id="RHEA:57888"/>
        <dbReference type="ChEBI" id="CHEBI:15378"/>
        <dbReference type="ChEBI" id="CHEBI:24646"/>
        <dbReference type="ChEBI" id="CHEBI:57540"/>
        <dbReference type="ChEBI" id="CHEBI:57945"/>
        <dbReference type="ChEBI" id="CHEBI:132124"/>
    </reaction>
</comment>
<comment type="subunit">
    <text evidence="1">NDH-1 is composed of 13 different subunits. Subunits NuoA, H, J, K, L, M, N constitute the membrane sector of the complex.</text>
</comment>
<comment type="subcellular location">
    <subcellularLocation>
        <location evidence="1">Cell inner membrane</location>
        <topology evidence="1">Multi-pass membrane protein</topology>
    </subcellularLocation>
</comment>
<comment type="similarity">
    <text evidence="1">Belongs to the complex I subunit 4L family.</text>
</comment>
<gene>
    <name evidence="1" type="primary">nuoK</name>
    <name type="ordered locus">BWG_2053</name>
</gene>
<feature type="chain" id="PRO_0000390044" description="NADH-quinone oxidoreductase subunit K">
    <location>
        <begin position="1"/>
        <end position="100"/>
    </location>
</feature>
<feature type="transmembrane region" description="Helical" evidence="1">
    <location>
        <begin position="4"/>
        <end position="24"/>
    </location>
</feature>
<feature type="transmembrane region" description="Helical" evidence="1">
    <location>
        <begin position="28"/>
        <end position="48"/>
    </location>
</feature>
<feature type="transmembrane region" description="Helical" evidence="1">
    <location>
        <begin position="60"/>
        <end position="80"/>
    </location>
</feature>
<proteinExistence type="inferred from homology"/>
<organism>
    <name type="scientific">Escherichia coli (strain K12 / MC4100 / BW2952)</name>
    <dbReference type="NCBI Taxonomy" id="595496"/>
    <lineage>
        <taxon>Bacteria</taxon>
        <taxon>Pseudomonadati</taxon>
        <taxon>Pseudomonadota</taxon>
        <taxon>Gammaproteobacteria</taxon>
        <taxon>Enterobacterales</taxon>
        <taxon>Enterobacteriaceae</taxon>
        <taxon>Escherichia</taxon>
    </lineage>
</organism>
<evidence type="ECO:0000255" key="1">
    <source>
        <dbReference type="HAMAP-Rule" id="MF_01456"/>
    </source>
</evidence>
<sequence>MIPLQHGLILAAILFVLGLTGLVIRRNLLFMLIGLEIMINASALAFVVAGSYWGQTDGQVMYILAISLAAAEASIGLALLLQLHRRRQNLNIDSVSEMRG</sequence>
<dbReference type="EC" id="7.1.1.-" evidence="1"/>
<dbReference type="EMBL" id="CP001396">
    <property type="protein sequence ID" value="ACR63874.1"/>
    <property type="molecule type" value="Genomic_DNA"/>
</dbReference>
<dbReference type="RefSeq" id="WP_000612644.1">
    <property type="nucleotide sequence ID" value="NC_012759.1"/>
</dbReference>
<dbReference type="SMR" id="C4ZUC2"/>
<dbReference type="GeneID" id="93033872"/>
<dbReference type="KEGG" id="ebw:BWG_2053"/>
<dbReference type="HOGENOM" id="CLU_144724_0_1_6"/>
<dbReference type="GO" id="GO:0030964">
    <property type="term" value="C:NADH dehydrogenase complex"/>
    <property type="evidence" value="ECO:0007669"/>
    <property type="project" value="TreeGrafter"/>
</dbReference>
<dbReference type="GO" id="GO:0005886">
    <property type="term" value="C:plasma membrane"/>
    <property type="evidence" value="ECO:0007669"/>
    <property type="project" value="UniProtKB-SubCell"/>
</dbReference>
<dbReference type="GO" id="GO:0050136">
    <property type="term" value="F:NADH:ubiquinone reductase (non-electrogenic) activity"/>
    <property type="evidence" value="ECO:0007669"/>
    <property type="project" value="UniProtKB-UniRule"/>
</dbReference>
<dbReference type="GO" id="GO:0048038">
    <property type="term" value="F:quinone binding"/>
    <property type="evidence" value="ECO:0007669"/>
    <property type="project" value="UniProtKB-KW"/>
</dbReference>
<dbReference type="GO" id="GO:0042773">
    <property type="term" value="P:ATP synthesis coupled electron transport"/>
    <property type="evidence" value="ECO:0007669"/>
    <property type="project" value="InterPro"/>
</dbReference>
<dbReference type="FunFam" id="1.10.287.3510:FF:000001">
    <property type="entry name" value="NADH-quinone oxidoreductase subunit K"/>
    <property type="match status" value="1"/>
</dbReference>
<dbReference type="Gene3D" id="1.10.287.3510">
    <property type="match status" value="1"/>
</dbReference>
<dbReference type="HAMAP" id="MF_01456">
    <property type="entry name" value="NDH1_NuoK"/>
    <property type="match status" value="1"/>
</dbReference>
<dbReference type="InterPro" id="IPR001133">
    <property type="entry name" value="NADH_UbQ_OxRdtase_chain4L/K"/>
</dbReference>
<dbReference type="InterPro" id="IPR039428">
    <property type="entry name" value="NUOK/Mnh_C1-like"/>
</dbReference>
<dbReference type="NCBIfam" id="NF004319">
    <property type="entry name" value="PRK05715.1-1"/>
    <property type="match status" value="1"/>
</dbReference>
<dbReference type="NCBIfam" id="NF004320">
    <property type="entry name" value="PRK05715.1-2"/>
    <property type="match status" value="1"/>
</dbReference>
<dbReference type="PANTHER" id="PTHR11434:SF16">
    <property type="entry name" value="NADH-UBIQUINONE OXIDOREDUCTASE CHAIN 4L"/>
    <property type="match status" value="1"/>
</dbReference>
<dbReference type="PANTHER" id="PTHR11434">
    <property type="entry name" value="NADH-UBIQUINONE OXIDOREDUCTASE SUBUNIT ND4L"/>
    <property type="match status" value="1"/>
</dbReference>
<dbReference type="Pfam" id="PF00420">
    <property type="entry name" value="Oxidored_q2"/>
    <property type="match status" value="1"/>
</dbReference>
<reference key="1">
    <citation type="journal article" date="2009" name="J. Bacteriol.">
        <title>Genomic sequencing reveals regulatory mutations and recombinational events in the widely used MC4100 lineage of Escherichia coli K-12.</title>
        <authorList>
            <person name="Ferenci T."/>
            <person name="Zhou Z."/>
            <person name="Betteridge T."/>
            <person name="Ren Y."/>
            <person name="Liu Y."/>
            <person name="Feng L."/>
            <person name="Reeves P.R."/>
            <person name="Wang L."/>
        </authorList>
    </citation>
    <scope>NUCLEOTIDE SEQUENCE [LARGE SCALE GENOMIC DNA]</scope>
    <source>
        <strain>K12 / MC4100 / BW2952</strain>
    </source>
</reference>
<protein>
    <recommendedName>
        <fullName evidence="1">NADH-quinone oxidoreductase subunit K</fullName>
        <ecNumber evidence="1">7.1.1.-</ecNumber>
    </recommendedName>
    <alternativeName>
        <fullName evidence="1">NADH dehydrogenase I subunit K</fullName>
    </alternativeName>
    <alternativeName>
        <fullName evidence="1">NDH-1 subunit K</fullName>
    </alternativeName>
</protein>